<evidence type="ECO:0000250" key="1">
    <source>
        <dbReference type="UniProtKB" id="P97260"/>
    </source>
</evidence>
<evidence type="ECO:0000250" key="2">
    <source>
        <dbReference type="UniProtKB" id="Q12770"/>
    </source>
</evidence>
<evidence type="ECO:0000255" key="3"/>
<evidence type="ECO:0000255" key="4">
    <source>
        <dbReference type="PROSITE-ProRule" id="PRU00199"/>
    </source>
</evidence>
<evidence type="ECO:0000305" key="5"/>
<evidence type="ECO:0000312" key="6">
    <source>
        <dbReference type="EMBL" id="AAH72950.1"/>
    </source>
</evidence>
<evidence type="ECO:0000312" key="7">
    <source>
        <dbReference type="EMBL" id="AAI27424.1"/>
    </source>
</evidence>
<name>SCAP_XENLA</name>
<gene>
    <name evidence="2" type="primary">scap</name>
</gene>
<accession>A0JPH4</accession>
<accession>Q6GQ00</accession>
<keyword id="KW-0153">Cholesterol metabolism</keyword>
<keyword id="KW-0968">Cytoplasmic vesicle</keyword>
<keyword id="KW-0256">Endoplasmic reticulum</keyword>
<keyword id="KW-0325">Glycoprotein</keyword>
<keyword id="KW-0333">Golgi apparatus</keyword>
<keyword id="KW-0443">Lipid metabolism</keyword>
<keyword id="KW-0446">Lipid-binding</keyword>
<keyword id="KW-0472">Membrane</keyword>
<keyword id="KW-1185">Reference proteome</keyword>
<keyword id="KW-0677">Repeat</keyword>
<keyword id="KW-0753">Steroid metabolism</keyword>
<keyword id="KW-1207">Sterol metabolism</keyword>
<keyword id="KW-0812">Transmembrane</keyword>
<keyword id="KW-1133">Transmembrane helix</keyword>
<keyword id="KW-0853">WD repeat</keyword>
<dbReference type="EMBL" id="BC072950">
    <property type="protein sequence ID" value="AAH72950.1"/>
    <property type="molecule type" value="mRNA"/>
</dbReference>
<dbReference type="EMBL" id="BC127423">
    <property type="protein sequence ID" value="AAI27424.1"/>
    <property type="molecule type" value="mRNA"/>
</dbReference>
<dbReference type="RefSeq" id="NP_001085277.1">
    <property type="nucleotide sequence ID" value="NM_001091808.1"/>
</dbReference>
<dbReference type="SMR" id="A0JPH4"/>
<dbReference type="GlyCosmos" id="A0JPH4">
    <property type="glycosylation" value="4 sites, No reported glycans"/>
</dbReference>
<dbReference type="DNASU" id="443598"/>
<dbReference type="GeneID" id="443598"/>
<dbReference type="KEGG" id="xla:443598"/>
<dbReference type="AGR" id="Xenbase:XB-GENE-996524"/>
<dbReference type="CTD" id="443598"/>
<dbReference type="Xenbase" id="XB-GENE-996524">
    <property type="gene designation" value="scap.S"/>
</dbReference>
<dbReference type="OrthoDB" id="361494at2759"/>
<dbReference type="Proteomes" id="UP000186698">
    <property type="component" value="Chromosome 6S"/>
</dbReference>
<dbReference type="Bgee" id="443598">
    <property type="expression patterns" value="Expressed in spleen and 19 other cell types or tissues"/>
</dbReference>
<dbReference type="GO" id="GO:0005789">
    <property type="term" value="C:endoplasmic reticulum membrane"/>
    <property type="evidence" value="ECO:0000250"/>
    <property type="project" value="UniProtKB"/>
</dbReference>
<dbReference type="GO" id="GO:0012507">
    <property type="term" value="C:ER to Golgi transport vesicle membrane"/>
    <property type="evidence" value="ECO:0007669"/>
    <property type="project" value="UniProtKB-SubCell"/>
</dbReference>
<dbReference type="GO" id="GO:0000139">
    <property type="term" value="C:Golgi membrane"/>
    <property type="evidence" value="ECO:0000250"/>
    <property type="project" value="UniProtKB"/>
</dbReference>
<dbReference type="GO" id="GO:0032936">
    <property type="term" value="C:SREBP-SCAP complex"/>
    <property type="evidence" value="ECO:0000318"/>
    <property type="project" value="GO_Central"/>
</dbReference>
<dbReference type="GO" id="GO:0032934">
    <property type="term" value="F:sterol binding"/>
    <property type="evidence" value="ECO:0000250"/>
    <property type="project" value="UniProtKB"/>
</dbReference>
<dbReference type="GO" id="GO:0008203">
    <property type="term" value="P:cholesterol metabolic process"/>
    <property type="evidence" value="ECO:0000250"/>
    <property type="project" value="UniProtKB"/>
</dbReference>
<dbReference type="GO" id="GO:0090110">
    <property type="term" value="P:COPII-coated vesicle cargo loading"/>
    <property type="evidence" value="ECO:0000250"/>
    <property type="project" value="UniProtKB"/>
</dbReference>
<dbReference type="GO" id="GO:0045540">
    <property type="term" value="P:regulation of cholesterol biosynthetic process"/>
    <property type="evidence" value="ECO:0000318"/>
    <property type="project" value="GO_Central"/>
</dbReference>
<dbReference type="GO" id="GO:0032933">
    <property type="term" value="P:SREBP signaling pathway"/>
    <property type="evidence" value="ECO:0000250"/>
    <property type="project" value="UniProtKB"/>
</dbReference>
<dbReference type="FunFam" id="2.130.10.10:FF:000209">
    <property type="entry name" value="sterol regulatory element-binding protein cleavage-activating protein-like"/>
    <property type="match status" value="1"/>
</dbReference>
<dbReference type="FunFam" id="2.130.10.10:FF:000391">
    <property type="entry name" value="sterol regulatory element-binding protein cleavage-activating protein-like"/>
    <property type="match status" value="1"/>
</dbReference>
<dbReference type="Gene3D" id="2.130.10.10">
    <property type="entry name" value="YVTN repeat-like/Quinoprotein amine dehydrogenase"/>
    <property type="match status" value="2"/>
</dbReference>
<dbReference type="InterPro" id="IPR057042">
    <property type="entry name" value="Beta-prop_SCAP"/>
</dbReference>
<dbReference type="InterPro" id="IPR053958">
    <property type="entry name" value="HMGCR/SNAP/NPC1-like_SSD"/>
</dbReference>
<dbReference type="InterPro" id="IPR030225">
    <property type="entry name" value="SCAP"/>
</dbReference>
<dbReference type="InterPro" id="IPR057041">
    <property type="entry name" value="SCAP_N"/>
</dbReference>
<dbReference type="InterPro" id="IPR000731">
    <property type="entry name" value="SSD"/>
</dbReference>
<dbReference type="InterPro" id="IPR015943">
    <property type="entry name" value="WD40/YVTN_repeat-like_dom_sf"/>
</dbReference>
<dbReference type="InterPro" id="IPR019775">
    <property type="entry name" value="WD40_repeat_CS"/>
</dbReference>
<dbReference type="InterPro" id="IPR036322">
    <property type="entry name" value="WD40_repeat_dom_sf"/>
</dbReference>
<dbReference type="InterPro" id="IPR001680">
    <property type="entry name" value="WD40_rpt"/>
</dbReference>
<dbReference type="PANTHER" id="PTHR46378">
    <property type="entry name" value="STEROL REGULATORY ELEMENT-BINDING PROTEIN CLEAVAGE-ACTIVATING PROTEIN"/>
    <property type="match status" value="1"/>
</dbReference>
<dbReference type="PANTHER" id="PTHR46378:SF1">
    <property type="entry name" value="STEROL REGULATORY ELEMENT-BINDING PROTEIN CLEAVAGE-ACTIVATING PROTEIN"/>
    <property type="match status" value="1"/>
</dbReference>
<dbReference type="Pfam" id="PF24017">
    <property type="entry name" value="Beta-prop_SCAP"/>
    <property type="match status" value="1"/>
</dbReference>
<dbReference type="Pfam" id="PF24006">
    <property type="entry name" value="SCAP_N"/>
    <property type="match status" value="1"/>
</dbReference>
<dbReference type="Pfam" id="PF12349">
    <property type="entry name" value="Sterol-sensing"/>
    <property type="match status" value="1"/>
</dbReference>
<dbReference type="SMART" id="SM00320">
    <property type="entry name" value="WD40"/>
    <property type="match status" value="6"/>
</dbReference>
<dbReference type="SUPFAM" id="SSF82866">
    <property type="entry name" value="Multidrug efflux transporter AcrB transmembrane domain"/>
    <property type="match status" value="1"/>
</dbReference>
<dbReference type="SUPFAM" id="SSF50978">
    <property type="entry name" value="WD40 repeat-like"/>
    <property type="match status" value="1"/>
</dbReference>
<dbReference type="PROSITE" id="PS50156">
    <property type="entry name" value="SSD"/>
    <property type="match status" value="1"/>
</dbReference>
<dbReference type="PROSITE" id="PS00678">
    <property type="entry name" value="WD_REPEATS_1"/>
    <property type="match status" value="1"/>
</dbReference>
<dbReference type="PROSITE" id="PS50082">
    <property type="entry name" value="WD_REPEATS_2"/>
    <property type="match status" value="2"/>
</dbReference>
<dbReference type="PROSITE" id="PS50294">
    <property type="entry name" value="WD_REPEATS_REGION"/>
    <property type="match status" value="1"/>
</dbReference>
<protein>
    <recommendedName>
        <fullName>Sterol regulatory element-binding protein cleavage-activating protein</fullName>
        <shortName>SCAP</shortName>
        <shortName>SREBP cleavage-activating protein</shortName>
    </recommendedName>
</protein>
<feature type="chain" id="PRO_0000315873" description="Sterol regulatory element-binding protein cleavage-activating protein">
    <location>
        <begin position="1"/>
        <end position="1311"/>
    </location>
</feature>
<feature type="topological domain" description="Cytoplasmic" evidence="1">
    <location>
        <begin position="1"/>
        <end position="18"/>
    </location>
</feature>
<feature type="transmembrane region" description="Helical; Name=1" evidence="3">
    <location>
        <begin position="19"/>
        <end position="39"/>
    </location>
</feature>
<feature type="topological domain" description="Lumenal" evidence="1">
    <location>
        <begin position="40"/>
        <end position="277"/>
    </location>
</feature>
<feature type="transmembrane region" description="Helical; Name=2" evidence="3">
    <location>
        <begin position="278"/>
        <end position="298"/>
    </location>
</feature>
<feature type="topological domain" description="Cytoplasmic" evidence="1">
    <location>
        <begin position="299"/>
        <end position="310"/>
    </location>
</feature>
<feature type="transmembrane region" description="Helical; Name=3" evidence="3">
    <location>
        <begin position="311"/>
        <end position="331"/>
    </location>
</feature>
<feature type="topological domain" description="Lumenal" evidence="1">
    <location>
        <begin position="332"/>
        <end position="342"/>
    </location>
</feature>
<feature type="transmembrane region" description="Helical; Name=4" evidence="3">
    <location>
        <begin position="343"/>
        <end position="363"/>
    </location>
</feature>
<feature type="topological domain" description="Cytoplasmic" evidence="1">
    <location>
        <begin position="364"/>
        <end position="399"/>
    </location>
</feature>
<feature type="transmembrane region" description="Helical; Name=5" evidence="3">
    <location>
        <begin position="400"/>
        <end position="420"/>
    </location>
</feature>
<feature type="topological domain" description="Lumenal" evidence="1">
    <location>
        <position position="421"/>
    </location>
</feature>
<feature type="transmembrane region" description="Helical; Name=6" evidence="3">
    <location>
        <begin position="422"/>
        <end position="442"/>
    </location>
</feature>
<feature type="topological domain" description="Cytoplasmic" evidence="1">
    <location>
        <begin position="443"/>
        <end position="512"/>
    </location>
</feature>
<feature type="transmembrane region" description="Helical; Name=7" evidence="3">
    <location>
        <begin position="513"/>
        <end position="533"/>
    </location>
</feature>
<feature type="topological domain" description="Lumenal" evidence="1">
    <location>
        <begin position="534"/>
        <end position="723"/>
    </location>
</feature>
<feature type="transmembrane region" description="Helical; Name=8" evidence="3">
    <location>
        <begin position="724"/>
        <end position="744"/>
    </location>
</feature>
<feature type="topological domain" description="Cytoplasmic" evidence="1">
    <location>
        <begin position="745"/>
        <end position="1311"/>
    </location>
</feature>
<feature type="domain" description="SSD" evidence="4">
    <location>
        <begin position="282"/>
        <end position="440"/>
    </location>
</feature>
<feature type="repeat" description="WD 1" evidence="3">
    <location>
        <begin position="790"/>
        <end position="827"/>
    </location>
</feature>
<feature type="repeat" description="WD 2" evidence="3">
    <location>
        <begin position="997"/>
        <end position="1034"/>
    </location>
</feature>
<feature type="repeat" description="WD 3" evidence="3">
    <location>
        <begin position="1037"/>
        <end position="1076"/>
    </location>
</feature>
<feature type="repeat" description="WD 4" evidence="3">
    <location>
        <begin position="1109"/>
        <end position="1146"/>
    </location>
</feature>
<feature type="repeat" description="WD 5" evidence="3">
    <location>
        <begin position="1149"/>
        <end position="1187"/>
    </location>
</feature>
<feature type="repeat" description="WD 6" evidence="3">
    <location>
        <begin position="1190"/>
        <end position="1227"/>
    </location>
</feature>
<feature type="repeat" description="WD 7" evidence="3">
    <location>
        <begin position="1230"/>
        <end position="1267"/>
    </location>
</feature>
<feature type="region of interest" description="Loop-1" evidence="1">
    <location>
        <begin position="46"/>
        <end position="282"/>
    </location>
</feature>
<feature type="region of interest" description="Loop-7" evidence="1">
    <location>
        <begin position="529"/>
        <end position="726"/>
    </location>
</feature>
<feature type="region of interest" description="Interaction with srebf" evidence="1">
    <location>
        <begin position="747"/>
        <end position="1311"/>
    </location>
</feature>
<feature type="short sequence motif" description="ER export signal" evidence="1">
    <location>
        <begin position="445"/>
        <end position="450"/>
    </location>
</feature>
<feature type="glycosylation site" description="N-linked (GlcNAc...) asparagine" evidence="3">
    <location>
        <position position="242"/>
    </location>
</feature>
<feature type="glycosylation site" description="N-linked (GlcNAc...) asparagine" evidence="3">
    <location>
        <position position="261"/>
    </location>
</feature>
<feature type="glycosylation site" description="N-linked (GlcNAc...) asparagine" evidence="3">
    <location>
        <position position="583"/>
    </location>
</feature>
<feature type="glycosylation site" description="N-linked (GlcNAc...) asparagine" evidence="3">
    <location>
        <position position="651"/>
    </location>
</feature>
<proteinExistence type="evidence at transcript level"/>
<reference evidence="7" key="1">
    <citation type="submission" date="2006-11" db="EMBL/GenBank/DDBJ databases">
        <authorList>
            <consortium name="NIH - Xenopus Gene Collection (XGC) project"/>
        </authorList>
    </citation>
    <scope>NUCLEOTIDE SEQUENCE [LARGE SCALE MRNA]</scope>
    <source>
        <tissue evidence="6">Neurula</tissue>
        <tissue>Tail bud</tissue>
    </source>
</reference>
<organism>
    <name type="scientific">Xenopus laevis</name>
    <name type="common">African clawed frog</name>
    <dbReference type="NCBI Taxonomy" id="8355"/>
    <lineage>
        <taxon>Eukaryota</taxon>
        <taxon>Metazoa</taxon>
        <taxon>Chordata</taxon>
        <taxon>Craniata</taxon>
        <taxon>Vertebrata</taxon>
        <taxon>Euteleostomi</taxon>
        <taxon>Amphibia</taxon>
        <taxon>Batrachia</taxon>
        <taxon>Anura</taxon>
        <taxon>Pipoidea</taxon>
        <taxon>Pipidae</taxon>
        <taxon>Xenopodinae</taxon>
        <taxon>Xenopus</taxon>
        <taxon>Xenopus</taxon>
    </lineage>
</organism>
<comment type="function">
    <text evidence="1">Escort protein required for cholesterol as well as lipid homeostasis (By similarity). Regulates export of the SCAP-SREBP complex from the endoplasmic reticulum to the Golgi upon low cholesterol, thereby regulating the processing of sterol regulatory element-binding proteins (SREBPs) SREBF1/SREBP1 and SREBF2/SREBP2 (By similarity). At high sterol concentrations, formation of a ternary complex with INSIG (INSIG1 or INSIG2) leads to mask the ER export signal in SCAP, promoting retention of the complex in the endoplasmic reticulum (By similarity). Low sterol concentrations trigger release of INSIG, a conformational change in the SSD domain of SCAP, unmasking of the ER export signal, promoting recruitment into COPII-coated vesicles and transport of the SCAP-SREBP to the Golgi: in the Golgi, SREBPs are then processed, releasing the transcription factor fragment of SREBPs from the membrane, its import into the nucleus and up-regulation of LDLR, INSIG1 and the mevalonate pathway (By similarity). Binds cholesterol via its SSD domain (By similarity).</text>
</comment>
<comment type="subunit">
    <text evidence="1">Membrane region forms a homotetramer. Component of the SCAP-SREBP complex (composed of SCAP and srebf1/srebp1 or srebf2/srebp2). Forms a ternary complex with insig1 or insig2 through its transmembrane domains at high sterol concentrations. Interacts with the SEC23-SEC24 complex.</text>
</comment>
<comment type="subcellular location">
    <subcellularLocation>
        <location evidence="2">Endoplasmic reticulum membrane</location>
        <topology evidence="3">Multi-pass membrane protein</topology>
    </subcellularLocation>
    <subcellularLocation>
        <location evidence="2">Golgi apparatus membrane</location>
        <topology evidence="3">Multi-pass membrane protein</topology>
    </subcellularLocation>
    <subcellularLocation>
        <location evidence="1">Cytoplasmic vesicle</location>
        <location evidence="1">COPII-coated vesicle membrane</location>
        <topology evidence="3">Multi-pass membrane protein</topology>
    </subcellularLocation>
    <text evidence="1 2">Moves from the endoplasmic reticulum to the Golgi in the absence of sterols. Requires the presence of SPRING1 for proper localization to endoplasmic reticulum.</text>
</comment>
<comment type="domain">
    <text evidence="1">Loop-1 binds to loop-7, enabling interaction with COPII-coated vesicles. When levels of cholesterol in the endoplasmic reticulum increase, Loop-1 binds to cholesterol instead, thereby disrupting direct binding between the two loops and preventing the SCAP-SREBP complex from exiting the endoplasmic reticulum.</text>
</comment>
<comment type="domain">
    <text evidence="1">Cholesterol bound to SSD domain of SCAP or oxysterol bound to INSIG (insig1 or insig2) leads to masking of an ER export signal (also named MELADL motif) on scap possibly by moving the signal further away from the ER membrane.</text>
</comment>
<comment type="similarity">
    <text evidence="5">Belongs to the WD repeat SCAP family.</text>
</comment>
<sequence length="1311" mass="145362">MPLIDKLRERISRAFYSHGLLCASYPIPIIILTALCILASCYPLLKLPLPGTGPVEYVTSVKDYSPPPLEPNPEDHSDQPDWYVGLPVAFIQQVLVKAVVSPWDKDFLAVDVFRSPLSRVFPLVEEIRNHVLRDKSQEKSLEDVCLQVTDLLPGLKKFRDKLPEHGCLLLSPANFWQNSQEQFSSDPDLIRTIHQHEPKTLQTSATLKDLLFGVPGKQSGVSLYNRKRIVSYTVTIALRRYNATFLDSLRSRLKRQHPSTNSSAASQHIVHVHFKEEIGIAELIPLVTTYIILFAYIYFSTRKIDLVKSKWGLALAAVVTVLSSLLMSVGLCTLFGLTPTLNGGEIFPYLVVVIGLENVLVLTKSVVSTPVDLEVKLRIAQGLRNESWFIMKNMATELGIILIGYFTLVPAIQEFCLFAVVGLVSDFFLQMFFFTTVLSIDIRRMELADLNKRIPAEACIPPPKPGAKRYDRQPTLRPATPHTITLQSLRNLRLPKRLRLVYFFARTRLAQRIIMAGTVVWIGILVYTDPAGLRNYLTVHVTEQSPLGGAVMPPIPVPVLSASNPHGPLSAVFPTGSSQLLENQSQRDSKEVIDSLSSRIWEESHPEDKSKERAAKIEDKAHTQVTWGAEDEETWRKLSFRHWPTLFSYYNITLAKKYISILPMIPVTLYLTPQEVSDARHPQEAQHSHPYLQREGKPDEAWARVEAKGAEKPTENQTPADVTLYKVAALGLASGIFLVLFFFLLYRLLCPKNYGQNGVSHGRRKKGDLPCDDYGYSPPETEIVPLVLRGHHMDIECLASDKMLLVSCCLAGQIRVWDAQSGDCLTIIPKPSLRRESSGVFEYQDNWEPTPECKYNPEESLENGYQLKRRTLHPPLFSDQPDLTSLIDTNFSEQPANEESGARQRLSCIKQESPPIGYDFSSLVQKVYEEHEVSSFGSFPLVLSPAPYGQCQLSSGRRSQTPAGCVDGSCARRKSSTEETTGYCNGSSSPAPSWTDSFESSVWSLGLQGNLIVVGRSNGNLEVWDAIEGSLRCSNCDGQSGITSLVFLNHRVVVARLNGSMDFYCLDSQKSSNQLQFRGAPNRSNVPSSPLYSTDDVIGCQRTHTVACAHRKPITALKAAAGRLVTGSQDHTVRIYRLEDACCLFTLQGHSGGITAIYIDETMVLASGGQDGAICLWDVLTGSRVSHMFGHRGDVTSLLCTASCVISSGLDDVISIWDRSTAIKLYSIQQDLGCGSSLGLISDNLLVTGGLGCVSFWDVGYGDLLQTVYLGKCEDSQPARHILVLDNSAIVCDFGSELSLVYVPSVLEKLD</sequence>